<keyword id="KW-0007">Acetylation</keyword>
<keyword id="KW-0963">Cytoplasm</keyword>
<keyword id="KW-0256">Endoplasmic reticulum</keyword>
<keyword id="KW-0325">Glycoprotein</keyword>
<keyword id="KW-0378">Hydrolase</keyword>
<keyword id="KW-0449">Lipoprotein</keyword>
<keyword id="KW-0472">Membrane</keyword>
<keyword id="KW-0597">Phosphoprotein</keyword>
<keyword id="KW-0636">Prenylation</keyword>
<keyword id="KW-0645">Protease</keyword>
<keyword id="KW-1185">Reference proteome</keyword>
<keyword id="KW-0788">Thiol protease</keyword>
<keyword id="KW-0833">Ubl conjugation pathway</keyword>
<reference key="1">
    <citation type="submission" date="2003-11" db="EMBL/GenBank/DDBJ databases">
        <title>Cloning and expression of ubiquitin carboxyl-terminal hydrolase in pig.</title>
        <authorList>
            <person name="Tian X."/>
            <person name="Li J."/>
            <person name="Chen Y."/>
        </authorList>
    </citation>
    <scope>NUCLEOTIDE SEQUENCE [MRNA]</scope>
    <source>
        <tissue>Longissimus muscle</tissue>
    </source>
</reference>
<sequence length="223" mass="24859">MQLKPMEINPEMLNKVLTRLGVAGHWRFADVLGLEEESLGSVPAPACALLLLFPLTAQHENFRKKQIEELKGQEVSPKVYFMKQTIGNSCGTIGLIHAVANNQDKLEFEDGSVLKQFLSETEKLSPEDRAKCFEKNEAIQAAHDAVAQEGQCRVDDKVNFHFILFNNVDGHLYELDGRMPFPVNHGASSEDSLLQDAAKVCREFTEREQGEVRFSAVALCKAA</sequence>
<evidence type="ECO:0000250" key="1"/>
<evidence type="ECO:0000250" key="2">
    <source>
        <dbReference type="UniProtKB" id="P09936"/>
    </source>
</evidence>
<evidence type="ECO:0000250" key="3">
    <source>
        <dbReference type="UniProtKB" id="Q00981"/>
    </source>
</evidence>
<evidence type="ECO:0000250" key="4">
    <source>
        <dbReference type="UniProtKB" id="Q9R0P9"/>
    </source>
</evidence>
<evidence type="ECO:0000255" key="5">
    <source>
        <dbReference type="PROSITE-ProRule" id="PRU01393"/>
    </source>
</evidence>
<evidence type="ECO:0000255" key="6">
    <source>
        <dbReference type="PROSITE-ProRule" id="PRU10091"/>
    </source>
</evidence>
<evidence type="ECO:0000305" key="7"/>
<feature type="chain" id="PRO_0000211059" description="Ubiquitin carboxyl-terminal hydrolase isozyme L1">
    <location>
        <begin position="1"/>
        <end position="220"/>
    </location>
</feature>
<feature type="propeptide" id="PRO_0000414314" description="Removed in mature form" evidence="1">
    <location>
        <begin position="221"/>
        <end position="223"/>
    </location>
</feature>
<feature type="domain" description="UCH catalytic" evidence="5">
    <location>
        <begin position="2"/>
        <end position="221"/>
    </location>
</feature>
<feature type="region of interest" description="Interaction with ubiquitin" evidence="2">
    <location>
        <begin position="5"/>
        <end position="10"/>
    </location>
</feature>
<feature type="region of interest" description="Interaction with ubiquitin" evidence="2">
    <location>
        <begin position="211"/>
        <end position="216"/>
    </location>
</feature>
<feature type="active site" description="Nucleophile" evidence="5 6">
    <location>
        <position position="90"/>
    </location>
</feature>
<feature type="active site" description="Proton donor" evidence="5">
    <location>
        <position position="161"/>
    </location>
</feature>
<feature type="site" description="Transition state stabilizer" evidence="5">
    <location>
        <position position="84"/>
    </location>
</feature>
<feature type="site" description="Important for enzyme activity" evidence="5">
    <location>
        <position position="176"/>
    </location>
</feature>
<feature type="modified residue" description="N-acetylmethionine" evidence="2">
    <location>
        <position position="1"/>
    </location>
</feature>
<feature type="modified residue" description="Phosphoserine" evidence="3">
    <location>
        <position position="125"/>
    </location>
</feature>
<feature type="lipid moiety-binding region" description="S-farnesyl cysteine" evidence="2">
    <location>
        <position position="220"/>
    </location>
</feature>
<name>UCHL1_PIG</name>
<proteinExistence type="evidence at transcript level"/>
<protein>
    <recommendedName>
        <fullName>Ubiquitin carboxyl-terminal hydrolase isozyme L1</fullName>
        <shortName>UCH-L1</shortName>
        <ecNumber evidence="2">3.4.19.12</ecNumber>
    </recommendedName>
    <alternativeName>
        <fullName>Ubiquitin thioesterase L1</fullName>
    </alternativeName>
</protein>
<gene>
    <name type="primary">UCHL1</name>
</gene>
<organism>
    <name type="scientific">Sus scrofa</name>
    <name type="common">Pig</name>
    <dbReference type="NCBI Taxonomy" id="9823"/>
    <lineage>
        <taxon>Eukaryota</taxon>
        <taxon>Metazoa</taxon>
        <taxon>Chordata</taxon>
        <taxon>Craniata</taxon>
        <taxon>Vertebrata</taxon>
        <taxon>Euteleostomi</taxon>
        <taxon>Mammalia</taxon>
        <taxon>Eutheria</taxon>
        <taxon>Laurasiatheria</taxon>
        <taxon>Artiodactyla</taxon>
        <taxon>Suina</taxon>
        <taxon>Suidae</taxon>
        <taxon>Sus</taxon>
    </lineage>
</organism>
<comment type="function">
    <text evidence="2 4">Ubiquitin-protein hydrolase involved both in the processing of ubiquitin precursors and of ubiquitinated proteins. This enzyme is a thiol protease that recognizes and hydrolyzes a peptide bond at the C-terminal glycine of ubiquitin (By similarity). Also binds to free monoubiquitin and may prevent its degradation in lysosomes (By similarity). The homodimer may have ATP-independent ubiquitin ligase activity (By similarity).</text>
</comment>
<comment type="catalytic activity">
    <reaction evidence="2">
        <text>Thiol-dependent hydrolysis of ester, thioester, amide, peptide and isopeptide bonds formed by the C-terminal Gly of ubiquitin (a 76-residue protein attached to proteins as an intracellular targeting signal).</text>
        <dbReference type="EC" id="3.4.19.12"/>
    </reaction>
</comment>
<comment type="subunit">
    <text evidence="1">Monomer. Homodimer. Interacts with COPS5 and SNCA (By similarity).</text>
</comment>
<comment type="subcellular location">
    <subcellularLocation>
        <location evidence="1">Cytoplasm</location>
    </subcellularLocation>
    <subcellularLocation>
        <location evidence="1">Endoplasmic reticulum membrane</location>
        <topology evidence="1">Lipid-anchor</topology>
    </subcellularLocation>
</comment>
<comment type="PTM">
    <text evidence="1">O-glycosylated.</text>
</comment>
<comment type="miscellaneous">
    <text evidence="1">In contrast to UCHL3, does not hydrolyze a peptide bond at the C-terminal glycine of NEDD8.</text>
</comment>
<comment type="similarity">
    <text evidence="7">Belongs to the peptidase C12 family.</text>
</comment>
<comment type="caution">
    <text evidence="2">The homodimer may have ATP-independent ubiquitin ligase activity. However, in another study, UCHL1 was shown to lack ubiquitin ligase activity.</text>
</comment>
<accession>Q6SEG5</accession>
<dbReference type="EC" id="3.4.19.12" evidence="2"/>
<dbReference type="EMBL" id="AY459532">
    <property type="protein sequence ID" value="AAR22407.1"/>
    <property type="molecule type" value="mRNA"/>
</dbReference>
<dbReference type="RefSeq" id="NP_998928.1">
    <property type="nucleotide sequence ID" value="NM_213763.2"/>
</dbReference>
<dbReference type="SMR" id="Q6SEG5"/>
<dbReference type="FunCoup" id="Q6SEG5">
    <property type="interactions" value="614"/>
</dbReference>
<dbReference type="STRING" id="9823.ENSSSCP00000020119"/>
<dbReference type="MEROPS" id="C12.001"/>
<dbReference type="PeptideAtlas" id="Q6SEG5"/>
<dbReference type="Ensembl" id="ENSSSCT00000024016.3">
    <property type="protein sequence ID" value="ENSSSCP00000020119.2"/>
    <property type="gene ID" value="ENSSSCG00000022945.4"/>
</dbReference>
<dbReference type="Ensembl" id="ENSSSCT00030032027.1">
    <property type="protein sequence ID" value="ENSSSCP00030014439.1"/>
    <property type="gene ID" value="ENSSSCG00030023051.1"/>
</dbReference>
<dbReference type="Ensembl" id="ENSSSCT00040061307.1">
    <property type="protein sequence ID" value="ENSSSCP00040025778.1"/>
    <property type="gene ID" value="ENSSSCG00040045613.1"/>
</dbReference>
<dbReference type="Ensembl" id="ENSSSCT00045049551.1">
    <property type="protein sequence ID" value="ENSSSCP00045034477.1"/>
    <property type="gene ID" value="ENSSSCG00045028998.1"/>
</dbReference>
<dbReference type="Ensembl" id="ENSSSCT00055038407.1">
    <property type="protein sequence ID" value="ENSSSCP00055030512.1"/>
    <property type="gene ID" value="ENSSSCG00055019353.1"/>
</dbReference>
<dbReference type="Ensembl" id="ENSSSCT00065070629.1">
    <property type="protein sequence ID" value="ENSSSCP00065030799.1"/>
    <property type="gene ID" value="ENSSSCG00065051563.1"/>
</dbReference>
<dbReference type="Ensembl" id="ENSSSCT00070040230.1">
    <property type="protein sequence ID" value="ENSSSCP00070033728.1"/>
    <property type="gene ID" value="ENSSSCG00070020275.1"/>
</dbReference>
<dbReference type="Ensembl" id="ENSSSCT00090001739">
    <property type="protein sequence ID" value="ENSSSCP00090000991"/>
    <property type="gene ID" value="ENSSSCG00090001095"/>
</dbReference>
<dbReference type="Ensembl" id="ENSSSCT00105021390">
    <property type="protein sequence ID" value="ENSSSCP00105015471"/>
    <property type="gene ID" value="ENSSSCG00105010652"/>
</dbReference>
<dbReference type="Ensembl" id="ENSSSCT00110044283">
    <property type="protein sequence ID" value="ENSSSCP00110031217"/>
    <property type="gene ID" value="ENSSSCG00110022821"/>
</dbReference>
<dbReference type="Ensembl" id="ENSSSCT00115030315">
    <property type="protein sequence ID" value="ENSSSCP00115028812"/>
    <property type="gene ID" value="ENSSSCG00115017198"/>
</dbReference>
<dbReference type="Ensembl" id="ENSSSCT00130028361">
    <property type="protein sequence ID" value="ENSSSCP00130019320"/>
    <property type="gene ID" value="ENSSSCG00130014277"/>
</dbReference>
<dbReference type="GeneID" id="396637"/>
<dbReference type="KEGG" id="ssc:396637"/>
<dbReference type="CTD" id="7345"/>
<dbReference type="VGNC" id="VGNC:94680">
    <property type="gene designation" value="UCHL1"/>
</dbReference>
<dbReference type="GeneTree" id="ENSGT00940000157306"/>
<dbReference type="InParanoid" id="Q6SEG5"/>
<dbReference type="OMA" id="CISNGEA"/>
<dbReference type="OrthoDB" id="427186at2759"/>
<dbReference type="Reactome" id="R-SSC-5689603">
    <property type="pathway name" value="UCH proteinases"/>
</dbReference>
<dbReference type="ChiTaRS" id="UCHL1">
    <property type="organism name" value="pig"/>
</dbReference>
<dbReference type="Proteomes" id="UP000008227">
    <property type="component" value="Chromosome 8"/>
</dbReference>
<dbReference type="Proteomes" id="UP000314985">
    <property type="component" value="Chromosome 8"/>
</dbReference>
<dbReference type="Proteomes" id="UP000694570">
    <property type="component" value="Unplaced"/>
</dbReference>
<dbReference type="Proteomes" id="UP000694571">
    <property type="component" value="Unplaced"/>
</dbReference>
<dbReference type="Proteomes" id="UP000694720">
    <property type="component" value="Unplaced"/>
</dbReference>
<dbReference type="Proteomes" id="UP000694722">
    <property type="component" value="Unplaced"/>
</dbReference>
<dbReference type="Proteomes" id="UP000694723">
    <property type="component" value="Unplaced"/>
</dbReference>
<dbReference type="Proteomes" id="UP000694724">
    <property type="component" value="Unplaced"/>
</dbReference>
<dbReference type="Proteomes" id="UP000694725">
    <property type="component" value="Unplaced"/>
</dbReference>
<dbReference type="Proteomes" id="UP000694726">
    <property type="component" value="Unplaced"/>
</dbReference>
<dbReference type="Proteomes" id="UP000694727">
    <property type="component" value="Unplaced"/>
</dbReference>
<dbReference type="Proteomes" id="UP000694728">
    <property type="component" value="Unplaced"/>
</dbReference>
<dbReference type="Bgee" id="ENSSSCG00000022945">
    <property type="expression patterns" value="Expressed in oocyte and 44 other cell types or tissues"/>
</dbReference>
<dbReference type="ExpressionAtlas" id="Q6SEG5">
    <property type="expression patterns" value="baseline and differential"/>
</dbReference>
<dbReference type="GO" id="GO:1904115">
    <property type="term" value="C:axon cytoplasm"/>
    <property type="evidence" value="ECO:0007669"/>
    <property type="project" value="GOC"/>
</dbReference>
<dbReference type="GO" id="GO:0005737">
    <property type="term" value="C:cytoplasm"/>
    <property type="evidence" value="ECO:0000318"/>
    <property type="project" value="GO_Central"/>
</dbReference>
<dbReference type="GO" id="GO:0005829">
    <property type="term" value="C:cytosol"/>
    <property type="evidence" value="ECO:0007669"/>
    <property type="project" value="Ensembl"/>
</dbReference>
<dbReference type="GO" id="GO:0005789">
    <property type="term" value="C:endoplasmic reticulum membrane"/>
    <property type="evidence" value="ECO:0007669"/>
    <property type="project" value="UniProtKB-SubCell"/>
</dbReference>
<dbReference type="GO" id="GO:0044306">
    <property type="term" value="C:neuron projection terminus"/>
    <property type="evidence" value="ECO:0007669"/>
    <property type="project" value="Ensembl"/>
</dbReference>
<dbReference type="GO" id="GO:0043025">
    <property type="term" value="C:neuronal cell body"/>
    <property type="evidence" value="ECO:0007669"/>
    <property type="project" value="Ensembl"/>
</dbReference>
<dbReference type="GO" id="GO:0005654">
    <property type="term" value="C:nucleoplasm"/>
    <property type="evidence" value="ECO:0007669"/>
    <property type="project" value="Ensembl"/>
</dbReference>
<dbReference type="GO" id="GO:0005886">
    <property type="term" value="C:plasma membrane"/>
    <property type="evidence" value="ECO:0007669"/>
    <property type="project" value="Ensembl"/>
</dbReference>
<dbReference type="GO" id="GO:0031694">
    <property type="term" value="F:alpha-2A adrenergic receptor binding"/>
    <property type="evidence" value="ECO:0007669"/>
    <property type="project" value="Ensembl"/>
</dbReference>
<dbReference type="GO" id="GO:0004843">
    <property type="term" value="F:cysteine-type deubiquitinase activity"/>
    <property type="evidence" value="ECO:0000318"/>
    <property type="project" value="GO_Central"/>
</dbReference>
<dbReference type="GO" id="GO:0004197">
    <property type="term" value="F:cysteine-type endopeptidase activity"/>
    <property type="evidence" value="ECO:0007669"/>
    <property type="project" value="Ensembl"/>
</dbReference>
<dbReference type="GO" id="GO:0008242">
    <property type="term" value="F:omega peptidase activity"/>
    <property type="evidence" value="ECO:0007669"/>
    <property type="project" value="Ensembl"/>
</dbReference>
<dbReference type="GO" id="GO:0043022">
    <property type="term" value="F:ribosome binding"/>
    <property type="evidence" value="ECO:0007669"/>
    <property type="project" value="Ensembl"/>
</dbReference>
<dbReference type="GO" id="GO:0043130">
    <property type="term" value="F:ubiquitin binding"/>
    <property type="evidence" value="ECO:0007669"/>
    <property type="project" value="Ensembl"/>
</dbReference>
<dbReference type="GO" id="GO:0031625">
    <property type="term" value="F:ubiquitin protein ligase binding"/>
    <property type="evidence" value="ECO:0007669"/>
    <property type="project" value="Ensembl"/>
</dbReference>
<dbReference type="GO" id="GO:0007628">
    <property type="term" value="P:adult walking behavior"/>
    <property type="evidence" value="ECO:0007669"/>
    <property type="project" value="Ensembl"/>
</dbReference>
<dbReference type="GO" id="GO:0007412">
    <property type="term" value="P:axon target recognition"/>
    <property type="evidence" value="ECO:0007669"/>
    <property type="project" value="Ensembl"/>
</dbReference>
<dbReference type="GO" id="GO:0019896">
    <property type="term" value="P:axonal transport of mitochondrion"/>
    <property type="evidence" value="ECO:0007669"/>
    <property type="project" value="Ensembl"/>
</dbReference>
<dbReference type="GO" id="GO:0071466">
    <property type="term" value="P:cellular response to xenobiotic stimulus"/>
    <property type="evidence" value="ECO:0007669"/>
    <property type="project" value="Ensembl"/>
</dbReference>
<dbReference type="GO" id="GO:0042755">
    <property type="term" value="P:eating behavior"/>
    <property type="evidence" value="ECO:0007669"/>
    <property type="project" value="Ensembl"/>
</dbReference>
<dbReference type="GO" id="GO:0002176">
    <property type="term" value="P:male germ cell proliferation"/>
    <property type="evidence" value="ECO:0007669"/>
    <property type="project" value="Ensembl"/>
</dbReference>
<dbReference type="GO" id="GO:0055001">
    <property type="term" value="P:muscle cell development"/>
    <property type="evidence" value="ECO:0007669"/>
    <property type="project" value="Ensembl"/>
</dbReference>
<dbReference type="GO" id="GO:0050905">
    <property type="term" value="P:neuromuscular process"/>
    <property type="evidence" value="ECO:0007669"/>
    <property type="project" value="Ensembl"/>
</dbReference>
<dbReference type="GO" id="GO:0045821">
    <property type="term" value="P:positive regulation of glycolytic process"/>
    <property type="evidence" value="ECO:0007669"/>
    <property type="project" value="Ensembl"/>
</dbReference>
<dbReference type="GO" id="GO:0030163">
    <property type="term" value="P:protein catabolic process"/>
    <property type="evidence" value="ECO:0000318"/>
    <property type="project" value="GO_Central"/>
</dbReference>
<dbReference type="GO" id="GO:0016579">
    <property type="term" value="P:protein deubiquitination"/>
    <property type="evidence" value="ECO:0007669"/>
    <property type="project" value="Ensembl"/>
</dbReference>
<dbReference type="GO" id="GO:0002931">
    <property type="term" value="P:response to ischemia"/>
    <property type="evidence" value="ECO:0007669"/>
    <property type="project" value="Ensembl"/>
</dbReference>
<dbReference type="GO" id="GO:0006511">
    <property type="term" value="P:ubiquitin-dependent protein catabolic process"/>
    <property type="evidence" value="ECO:0007669"/>
    <property type="project" value="InterPro"/>
</dbReference>
<dbReference type="CDD" id="cd09616">
    <property type="entry name" value="Peptidase_C12_UCH_L1_L3"/>
    <property type="match status" value="1"/>
</dbReference>
<dbReference type="FunFam" id="3.40.532.10:FF:000004">
    <property type="entry name" value="Ubiquitin carboxyl-terminal hydrolase"/>
    <property type="match status" value="1"/>
</dbReference>
<dbReference type="Gene3D" id="3.40.532.10">
    <property type="entry name" value="Peptidase C12, ubiquitin carboxyl-terminal hydrolase"/>
    <property type="match status" value="1"/>
</dbReference>
<dbReference type="InterPro" id="IPR038765">
    <property type="entry name" value="Papain-like_cys_pep_sf"/>
</dbReference>
<dbReference type="InterPro" id="IPR001578">
    <property type="entry name" value="Peptidase_C12_UCH"/>
</dbReference>
<dbReference type="InterPro" id="IPR036959">
    <property type="entry name" value="Peptidase_C12_UCH_sf"/>
</dbReference>
<dbReference type="InterPro" id="IPR057254">
    <property type="entry name" value="UCH_AS"/>
</dbReference>
<dbReference type="PANTHER" id="PTHR10589">
    <property type="entry name" value="UBIQUITIN CARBOXYL-TERMINAL HYDROLASE"/>
    <property type="match status" value="1"/>
</dbReference>
<dbReference type="PANTHER" id="PTHR10589:SF19">
    <property type="entry name" value="UBIQUITIN CARBOXYL-TERMINAL HYDROLASE ISOZYME L1"/>
    <property type="match status" value="1"/>
</dbReference>
<dbReference type="Pfam" id="PF01088">
    <property type="entry name" value="Peptidase_C12"/>
    <property type="match status" value="1"/>
</dbReference>
<dbReference type="PRINTS" id="PR00707">
    <property type="entry name" value="UBCTHYDRLASE"/>
</dbReference>
<dbReference type="SUPFAM" id="SSF54001">
    <property type="entry name" value="Cysteine proteinases"/>
    <property type="match status" value="1"/>
</dbReference>
<dbReference type="PROSITE" id="PS00140">
    <property type="entry name" value="UCH_1"/>
    <property type="match status" value="1"/>
</dbReference>
<dbReference type="PROSITE" id="PS52048">
    <property type="entry name" value="UCH_DOMAIN"/>
    <property type="match status" value="1"/>
</dbReference>